<accession>P46364</accession>
<sequence length="42" mass="4508">SELKDIIAAVTPCKGADFELQALKIRQPQGDEVLVKXXATGM</sequence>
<dbReference type="EC" id="1.1.1.90"/>
<dbReference type="STRING" id="106649.GCA_000829655_00508"/>
<dbReference type="GO" id="GO:0018456">
    <property type="term" value="F:aryl-alcohol dehydrogenase (NAD+) activity"/>
    <property type="evidence" value="ECO:0007669"/>
    <property type="project" value="UniProtKB-EC"/>
</dbReference>
<dbReference type="GO" id="GO:0046872">
    <property type="term" value="F:metal ion binding"/>
    <property type="evidence" value="ECO:0007669"/>
    <property type="project" value="UniProtKB-KW"/>
</dbReference>
<dbReference type="GO" id="GO:0009056">
    <property type="term" value="P:catabolic process"/>
    <property type="evidence" value="ECO:0007669"/>
    <property type="project" value="UniProtKB-KW"/>
</dbReference>
<dbReference type="InterPro" id="IPR011032">
    <property type="entry name" value="GroES-like_sf"/>
</dbReference>
<dbReference type="SUPFAM" id="SSF50129">
    <property type="entry name" value="GroES-like"/>
    <property type="match status" value="1"/>
</dbReference>
<reference key="1">
    <citation type="journal article" date="1991" name="Biochem. J.">
        <title>Comparison of benzyl alcohol dehydrogenases and benzaldehyde dehydrogenases from the benzyl alcohol and mandelate pathways in Acinetobacter calcoaceticus and from the TOL-plasmid-encoded toluene pathway in Pseudomonas putida. N-terminal amino acid sequences, amino acid compositions and immunological cross-reactions.</title>
        <authorList>
            <person name="Chalmers R.M."/>
            <person name="Keen J.N."/>
            <person name="Fewson C.A."/>
        </authorList>
    </citation>
    <scope>PROTEIN SEQUENCE</scope>
    <source>
        <strain>ATCC 11171 / DSM 590 / CCUG 2491 / LMG 988 / NCIMB 8250 / CIP 63.46 / B94</strain>
    </source>
</reference>
<evidence type="ECO:0000250" key="1"/>
<evidence type="ECO:0000305" key="2"/>
<proteinExistence type="evidence at protein level"/>
<name>XYLB_ACIGI</name>
<keyword id="KW-0058">Aromatic hydrocarbons catabolism</keyword>
<keyword id="KW-0903">Direct protein sequencing</keyword>
<keyword id="KW-0479">Metal-binding</keyword>
<keyword id="KW-0520">NAD</keyword>
<keyword id="KW-0560">Oxidoreductase</keyword>
<keyword id="KW-0862">Zinc</keyword>
<feature type="chain" id="PRO_0000160828" description="Aryl-alcohol dehydrogenase">
    <location>
        <begin position="1"/>
        <end position="42" status="greater than"/>
    </location>
</feature>
<feature type="non-terminal residue">
    <location>
        <position position="42"/>
    </location>
</feature>
<comment type="function">
    <text>Oxidizes primary alcohols with an aromatic or cyclohex-1-ene ring. It is highly specific for benzyl alcohol.</text>
</comment>
<comment type="catalytic activity">
    <reaction>
        <text>an aromatic primary alcohol + NAD(+) = an aromatic aldehyde + NADH + H(+)</text>
        <dbReference type="Rhea" id="RHEA:12076"/>
        <dbReference type="ChEBI" id="CHEBI:15378"/>
        <dbReference type="ChEBI" id="CHEBI:33855"/>
        <dbReference type="ChEBI" id="CHEBI:33857"/>
        <dbReference type="ChEBI" id="CHEBI:57540"/>
        <dbReference type="ChEBI" id="CHEBI:57945"/>
        <dbReference type="EC" id="1.1.1.90"/>
    </reaction>
</comment>
<comment type="cofactor">
    <cofactor evidence="1">
        <name>Zn(2+)</name>
        <dbReference type="ChEBI" id="CHEBI:29105"/>
    </cofactor>
    <text evidence="1">Binds 2 Zn(2+) ions per subunit.</text>
</comment>
<comment type="subunit">
    <text evidence="1">Homodimer.</text>
</comment>
<comment type="similarity">
    <text evidence="2">Belongs to the zinc-containing alcohol dehydrogenase family.</text>
</comment>
<protein>
    <recommendedName>
        <fullName>Aryl-alcohol dehydrogenase</fullName>
        <ecNumber>1.1.1.90</ecNumber>
    </recommendedName>
    <alternativeName>
        <fullName>Benzyl alcohol dehydrogenase</fullName>
        <shortName>BADH</shortName>
    </alternativeName>
</protein>
<organism>
    <name type="scientific">Acinetobacter guillouiae</name>
    <name type="common">Acinetobacter genomosp. 11</name>
    <dbReference type="NCBI Taxonomy" id="106649"/>
    <lineage>
        <taxon>Bacteria</taxon>
        <taxon>Pseudomonadati</taxon>
        <taxon>Pseudomonadota</taxon>
        <taxon>Gammaproteobacteria</taxon>
        <taxon>Moraxellales</taxon>
        <taxon>Moraxellaceae</taxon>
        <taxon>Acinetobacter</taxon>
    </lineage>
</organism>